<gene>
    <name type="ORF">FGRRES_15740</name>
    <name type="ORF">FGSG_00420</name>
</gene>
<protein>
    <recommendedName>
        <fullName evidence="1">GPN-loop GTPase 3</fullName>
    </recommendedName>
</protein>
<proteinExistence type="inferred from homology"/>
<reference key="1">
    <citation type="journal article" date="2007" name="Science">
        <title>The Fusarium graminearum genome reveals a link between localized polymorphism and pathogen specialization.</title>
        <authorList>
            <person name="Cuomo C.A."/>
            <person name="Gueldener U."/>
            <person name="Xu J.-R."/>
            <person name="Trail F."/>
            <person name="Turgeon B.G."/>
            <person name="Di Pietro A."/>
            <person name="Walton J.D."/>
            <person name="Ma L.-J."/>
            <person name="Baker S.E."/>
            <person name="Rep M."/>
            <person name="Adam G."/>
            <person name="Antoniw J."/>
            <person name="Baldwin T."/>
            <person name="Calvo S.E."/>
            <person name="Chang Y.-L."/>
            <person name="DeCaprio D."/>
            <person name="Gale L.R."/>
            <person name="Gnerre S."/>
            <person name="Goswami R.S."/>
            <person name="Hammond-Kosack K."/>
            <person name="Harris L.J."/>
            <person name="Hilburn K."/>
            <person name="Kennell J.C."/>
            <person name="Kroken S."/>
            <person name="Magnuson J.K."/>
            <person name="Mannhaupt G."/>
            <person name="Mauceli E.W."/>
            <person name="Mewes H.-W."/>
            <person name="Mitterbauer R."/>
            <person name="Muehlbauer G."/>
            <person name="Muensterkoetter M."/>
            <person name="Nelson D."/>
            <person name="O'Donnell K."/>
            <person name="Ouellet T."/>
            <person name="Qi W."/>
            <person name="Quesneville H."/>
            <person name="Roncero M.I.G."/>
            <person name="Seong K.-Y."/>
            <person name="Tetko I.V."/>
            <person name="Urban M."/>
            <person name="Waalwijk C."/>
            <person name="Ward T.J."/>
            <person name="Yao J."/>
            <person name="Birren B.W."/>
            <person name="Kistler H.C."/>
        </authorList>
    </citation>
    <scope>NUCLEOTIDE SEQUENCE [LARGE SCALE GENOMIC DNA]</scope>
    <source>
        <strain>ATCC MYA-4620 / CBS 123657 / FGSC 9075 / NRRL 31084 / PH-1</strain>
    </source>
</reference>
<reference key="2">
    <citation type="journal article" date="2010" name="Nature">
        <title>Comparative genomics reveals mobile pathogenicity chromosomes in Fusarium.</title>
        <authorList>
            <person name="Ma L.-J."/>
            <person name="van der Does H.C."/>
            <person name="Borkovich K.A."/>
            <person name="Coleman J.J."/>
            <person name="Daboussi M.-J."/>
            <person name="Di Pietro A."/>
            <person name="Dufresne M."/>
            <person name="Freitag M."/>
            <person name="Grabherr M."/>
            <person name="Henrissat B."/>
            <person name="Houterman P.M."/>
            <person name="Kang S."/>
            <person name="Shim W.-B."/>
            <person name="Woloshuk C."/>
            <person name="Xie X."/>
            <person name="Xu J.-R."/>
            <person name="Antoniw J."/>
            <person name="Baker S.E."/>
            <person name="Bluhm B.H."/>
            <person name="Breakspear A."/>
            <person name="Brown D.W."/>
            <person name="Butchko R.A.E."/>
            <person name="Chapman S."/>
            <person name="Coulson R."/>
            <person name="Coutinho P.M."/>
            <person name="Danchin E.G.J."/>
            <person name="Diener A."/>
            <person name="Gale L.R."/>
            <person name="Gardiner D.M."/>
            <person name="Goff S."/>
            <person name="Hammond-Kosack K.E."/>
            <person name="Hilburn K."/>
            <person name="Hua-Van A."/>
            <person name="Jonkers W."/>
            <person name="Kazan K."/>
            <person name="Kodira C.D."/>
            <person name="Koehrsen M."/>
            <person name="Kumar L."/>
            <person name="Lee Y.-H."/>
            <person name="Li L."/>
            <person name="Manners J.M."/>
            <person name="Miranda-Saavedra D."/>
            <person name="Mukherjee M."/>
            <person name="Park G."/>
            <person name="Park J."/>
            <person name="Park S.-Y."/>
            <person name="Proctor R.H."/>
            <person name="Regev A."/>
            <person name="Ruiz-Roldan M.C."/>
            <person name="Sain D."/>
            <person name="Sakthikumar S."/>
            <person name="Sykes S."/>
            <person name="Schwartz D.C."/>
            <person name="Turgeon B.G."/>
            <person name="Wapinski I."/>
            <person name="Yoder O."/>
            <person name="Young S."/>
            <person name="Zeng Q."/>
            <person name="Zhou S."/>
            <person name="Galagan J."/>
            <person name="Cuomo C.A."/>
            <person name="Kistler H.C."/>
            <person name="Rep M."/>
        </authorList>
    </citation>
    <scope>GENOME REANNOTATION</scope>
    <source>
        <strain>ATCC MYA-4620 / CBS 123657 / FGSC 9075 / NRRL 31084 / PH-1</strain>
    </source>
</reference>
<reference key="3">
    <citation type="journal article" date="2015" name="BMC Genomics">
        <title>The completed genome sequence of the pathogenic ascomycete fungus Fusarium graminearum.</title>
        <authorList>
            <person name="King R."/>
            <person name="Urban M."/>
            <person name="Hammond-Kosack M.C.U."/>
            <person name="Hassani-Pak K."/>
            <person name="Hammond-Kosack K.E."/>
        </authorList>
    </citation>
    <scope>NUCLEOTIDE SEQUENCE [LARGE SCALE GENOMIC DNA]</scope>
    <source>
        <strain>ATCC MYA-4620 / CBS 123657 / FGSC 9075 / NRRL 31084 / PH-1</strain>
    </source>
</reference>
<accession>Q4IQT8</accession>
<accession>A0A098D0B7</accession>
<accession>A0A0E0RM73</accession>
<accession>I1RA93</accession>
<keyword id="KW-0342">GTP-binding</keyword>
<keyword id="KW-0378">Hydrolase</keyword>
<keyword id="KW-0547">Nucleotide-binding</keyword>
<keyword id="KW-1185">Reference proteome</keyword>
<sequence>MSKFGAMVMGPAGAGKSTFCAALITHLNLNRRSAFYINLDPAAESFEHEPDLDIKELISLKDAMEEVGLGPNGGLIYCFEFLMENLDWLTDALEGLTEEYLIIIDMPGQIELYTHVPILPALVKFLSQPGSLDVRMAAVYLLEATFVVDRAKFFSGTLSAMSAMLMLEVPHINILSKMDLVKGQVKKKDLKRFLTPDVGLLDDDPVEHTRRIAEGQDAEDDESKAPDEKDQVMKGASFRRLNRAVAGLIESFSMINYHKLDVTNEDSVAAILSYIDDCIQFHEAQDPKEPHDDEETEEFEG</sequence>
<feature type="chain" id="PRO_0000255592" description="GPN-loop GTPase 3">
    <location>
        <begin position="1"/>
        <end position="301"/>
    </location>
</feature>
<feature type="region of interest" description="Disordered" evidence="3">
    <location>
        <begin position="212"/>
        <end position="232"/>
    </location>
</feature>
<feature type="short sequence motif" description="Gly-Pro-Asn (GPN)-loop; involved in dimer interface" evidence="2">
    <location>
        <begin position="70"/>
        <end position="72"/>
    </location>
</feature>
<feature type="compositionally biased region" description="Basic and acidic residues" evidence="3">
    <location>
        <begin position="223"/>
        <end position="232"/>
    </location>
</feature>
<feature type="binding site" evidence="2">
    <location>
        <begin position="13"/>
        <end position="18"/>
    </location>
    <ligand>
        <name>GTP</name>
        <dbReference type="ChEBI" id="CHEBI:37565"/>
    </ligand>
</feature>
<feature type="binding site" evidence="2">
    <location>
        <begin position="176"/>
        <end position="179"/>
    </location>
    <ligand>
        <name>GTP</name>
        <dbReference type="ChEBI" id="CHEBI:37565"/>
    </ligand>
</feature>
<feature type="site" description="Stabilizes the phosphate intermediate; shared with dimeric partner" evidence="2">
    <location>
        <position position="72"/>
    </location>
</feature>
<dbReference type="EMBL" id="DS231663">
    <property type="protein sequence ID" value="ESU05601.1"/>
    <property type="status" value="ALT_SEQ"/>
    <property type="molecule type" value="Genomic_DNA"/>
</dbReference>
<dbReference type="EMBL" id="HG970332">
    <property type="protein sequence ID" value="CEF72348.1"/>
    <property type="molecule type" value="Genomic_DNA"/>
</dbReference>
<dbReference type="RefSeq" id="XP_011316086.1">
    <property type="nucleotide sequence ID" value="XM_011317784.1"/>
</dbReference>
<dbReference type="SMR" id="Q4IQT8"/>
<dbReference type="FunCoup" id="Q4IQT8">
    <property type="interactions" value="924"/>
</dbReference>
<dbReference type="STRING" id="229533.Q4IQT8"/>
<dbReference type="GeneID" id="23547909"/>
<dbReference type="KEGG" id="fgr:FGSG_00420"/>
<dbReference type="VEuPathDB" id="FungiDB:FGRAMPH1_01G01091"/>
<dbReference type="eggNOG" id="KOG1534">
    <property type="taxonomic scope" value="Eukaryota"/>
</dbReference>
<dbReference type="HOGENOM" id="CLU_037460_0_0_1"/>
<dbReference type="InParanoid" id="Q4IQT8"/>
<dbReference type="OrthoDB" id="27688at110618"/>
<dbReference type="PHI-base" id="PHI:1618"/>
<dbReference type="Proteomes" id="UP000070720">
    <property type="component" value="Chromosome 1"/>
</dbReference>
<dbReference type="GO" id="GO:0005525">
    <property type="term" value="F:GTP binding"/>
    <property type="evidence" value="ECO:0007669"/>
    <property type="project" value="UniProtKB-KW"/>
</dbReference>
<dbReference type="GO" id="GO:0003924">
    <property type="term" value="F:GTPase activity"/>
    <property type="evidence" value="ECO:0007669"/>
    <property type="project" value="TreeGrafter"/>
</dbReference>
<dbReference type="CDD" id="cd17872">
    <property type="entry name" value="GPN3"/>
    <property type="match status" value="1"/>
</dbReference>
<dbReference type="FunFam" id="3.40.50.300:FF:000552">
    <property type="entry name" value="GPN-loop GTPase 3"/>
    <property type="match status" value="1"/>
</dbReference>
<dbReference type="Gene3D" id="3.40.50.300">
    <property type="entry name" value="P-loop containing nucleotide triphosphate hydrolases"/>
    <property type="match status" value="1"/>
</dbReference>
<dbReference type="InterPro" id="IPR004130">
    <property type="entry name" value="Gpn"/>
</dbReference>
<dbReference type="InterPro" id="IPR030228">
    <property type="entry name" value="Gpn3"/>
</dbReference>
<dbReference type="InterPro" id="IPR027417">
    <property type="entry name" value="P-loop_NTPase"/>
</dbReference>
<dbReference type="PANTHER" id="PTHR21231:SF7">
    <property type="entry name" value="GPN-LOOP GTPASE 3"/>
    <property type="match status" value="1"/>
</dbReference>
<dbReference type="PANTHER" id="PTHR21231">
    <property type="entry name" value="XPA-BINDING PROTEIN 1-RELATED"/>
    <property type="match status" value="1"/>
</dbReference>
<dbReference type="Pfam" id="PF03029">
    <property type="entry name" value="ATP_bind_1"/>
    <property type="match status" value="1"/>
</dbReference>
<dbReference type="SUPFAM" id="SSF52540">
    <property type="entry name" value="P-loop containing nucleoside triphosphate hydrolases"/>
    <property type="match status" value="1"/>
</dbReference>
<name>GPN3_GIBZE</name>
<comment type="function">
    <text evidence="1">Small GTPase required for proper nuclear import of RNA polymerase II and III (RNAPII and RNAPIII). May act at an RNAP assembly step prior to nuclear import.</text>
</comment>
<comment type="subunit">
    <text evidence="1">Heterodimers with GPN1 or GPN2. Binds to RNA polymerase II (RNAPII).</text>
</comment>
<comment type="similarity">
    <text evidence="4">Belongs to the GPN-loop GTPase family.</text>
</comment>
<comment type="sequence caution" evidence="4">
    <conflict type="erroneous gene model prediction">
        <sequence resource="EMBL-CDS" id="ESU05601"/>
    </conflict>
</comment>
<evidence type="ECO:0000250" key="1">
    <source>
        <dbReference type="UniProtKB" id="Q06543"/>
    </source>
</evidence>
<evidence type="ECO:0000250" key="2">
    <source>
        <dbReference type="UniProtKB" id="Q9UYR9"/>
    </source>
</evidence>
<evidence type="ECO:0000256" key="3">
    <source>
        <dbReference type="SAM" id="MobiDB-lite"/>
    </source>
</evidence>
<evidence type="ECO:0000305" key="4"/>
<organism>
    <name type="scientific">Gibberella zeae (strain ATCC MYA-4620 / CBS 123657 / FGSC 9075 / NRRL 31084 / PH-1)</name>
    <name type="common">Wheat head blight fungus</name>
    <name type="synonym">Fusarium graminearum</name>
    <dbReference type="NCBI Taxonomy" id="229533"/>
    <lineage>
        <taxon>Eukaryota</taxon>
        <taxon>Fungi</taxon>
        <taxon>Dikarya</taxon>
        <taxon>Ascomycota</taxon>
        <taxon>Pezizomycotina</taxon>
        <taxon>Sordariomycetes</taxon>
        <taxon>Hypocreomycetidae</taxon>
        <taxon>Hypocreales</taxon>
        <taxon>Nectriaceae</taxon>
        <taxon>Fusarium</taxon>
    </lineage>
</organism>